<proteinExistence type="inferred from homology"/>
<organism>
    <name type="scientific">Ononis yellow mosaic virus</name>
    <dbReference type="NCBI Taxonomy" id="12153"/>
    <lineage>
        <taxon>Viruses</taxon>
        <taxon>Riboviria</taxon>
        <taxon>Orthornavirae</taxon>
        <taxon>Kitrinoviricota</taxon>
        <taxon>Alsuviricetes</taxon>
        <taxon>Tymovirales</taxon>
        <taxon>Tymoviridae</taxon>
        <taxon>Tymovirus</taxon>
        <taxon>Tymovirus ononis</taxon>
    </lineage>
</organism>
<evidence type="ECO:0000250" key="1"/>
<evidence type="ECO:0000250" key="2">
    <source>
        <dbReference type="UniProtKB" id="P10358"/>
    </source>
</evidence>
<evidence type="ECO:0000250" key="3">
    <source>
        <dbReference type="UniProtKB" id="Q91TW9"/>
    </source>
</evidence>
<evidence type="ECO:0000255" key="4">
    <source>
        <dbReference type="PROSITE-ProRule" id="PRU00539"/>
    </source>
</evidence>
<evidence type="ECO:0000255" key="5">
    <source>
        <dbReference type="PROSITE-ProRule" id="PRU01074"/>
    </source>
</evidence>
<evidence type="ECO:0000255" key="6">
    <source>
        <dbReference type="PROSITE-ProRule" id="PRU01079"/>
    </source>
</evidence>
<evidence type="ECO:0000256" key="7">
    <source>
        <dbReference type="SAM" id="MobiDB-lite"/>
    </source>
</evidence>
<evidence type="ECO:0000305" key="8"/>
<sequence length="1776" mass="198129">MAFELALNALASSTHKDSSLNPVLNSAVQPLQTSLQNFPWIIGKEHLPFLLAAGIPTSGFGCNPHPHAVHKVIETFLLFNHWSFMATVQASVMFMKPSKFKKLASVNPNFSELVNYRLTAADSVRYPSTSTSLPKYEIVFMHDALMYFNPSQILDLFIQCPSLQRLHCSLVVPPESSFTDLSLHPNLYTYTISGNTLHYVPEGHHAGSYDQPLDAISWLKLNSIHSPHLNLSVSKLESWGPVHSLLITRGLPHLPSSEKQQVSFHIPNCLPLPEATFLHQPLRHRLVPTEVYDALFTYTRAVRTLRTSDPAGFVRTHSNKPQYSWVTSRAWDNLQTYALLNAPVRPVVLFDFFLSPLKKFQLFMSQHINSLVIKALPFLGLIPPLVKLTTLGFPIPSVSHFQILFFTMIGPSGQFILEAFPSMLHPAISYLESCGLVPRLPPPVAQQLQTMGILRKRSAFSLKTSLSTVKWPSWKITALISALPAALSVFLKTISPLSLQSLHDGYNAHLHPSPFNLSWSLETFHVQSPSPFLPLSLTPPSPSEEIALPPPIFRVPPPLPAQETPSPPAPALVPPTQPPQPQPWEEIISTFLSSLNASSHKPSPSSAPLESPSPIPESFEVLAEAPQHQRSINECGALNQLPLPVPSPLQNSTNPKPPFPSSDLLSDMSCTGPVVEFETIFPAEYHMSNGSFPTRLRGHPRSSAPFPQKHCLLTAVASQLSYTEHQLWEFLCDMLPDSLLTNSEVENFGLSTDHLTCLSYRLHFECIIHTSHSTIPYGIKKASTVIQISYIDGPPKHFKAFIKLAAAAPGSNPSKSNLVRAALRFKYNDAFLPFWDAHQHTISVPHAKNLISNMKNGFDGITSQLSGPSNKSPKMKLLELDATIDVSFPRKCDVIHIAGFPGCGKSHPIQKLLQTPAFRHFRLSVPTNELRSEWKRDLNLPESEVWRLCTWETALFKSSNILVVDEIYKLPRGYLDLILLADPSIQLVIMLGDPLQGEYHSSHPSSSNSRLESETTRLSKYIDCYCWWTYRCPKAVADLFGVKTFNSNEGFIRAVLSHPPNLPNLVNSIATANTMQSLGHHALTISSSQGMTYSDPVTVLLDRHSLLITPQTALVALTRSRSGIYFIGSMYTASGSAGTSYMFSCALTGLPVDMMSAFPLFHTLPLIHEPIRSRRHRLVAGHTPSLHVPPSNKWPHRLHLPPHIPTSHSKDVILAHGIVASNAPERRLTTLHLPPTRLPLHFDLESCNPSTVSTSSTSNSEVPFTHAFLGESFEELAAHFLPAHDPDLKEVTVGDQTSQQFPYLDQPYTLSCQPSSLLAASHKPASDPTLLIFSISKRLRFRASSSPYAFTPNDLILGHLLYTNWCKAFGRCPNSTIPFNPALFAECICLNEYAQLSSKTQATIVSNASRSDPDWRYTVVRIFAKSQHKVNDGSIFGSWKACQTLALMHDFVILTLGPVKKYQRIIDHYDRPNFIYTHCGKTPSELSAWSHSFLKGDAYICNDYTSFDQSQHGEAVIFESLKMHRVGIPRHLIDLHIYLKTNVSTQFGPLTCMRLTGEPGTYDDNTDYNLAVIFSQYVISDHPIMVSGDDSVICGHPPINPNWPAVEKLLHLRFKTEETSLPLFCGYYVGPTGCCRNPFALFAKLMISYDKGNLFETLPSYLYEFSIGHRLGDVVRLLFPDHLLKYYSACWDLFCRKCTASQKLILSFEPIPPSFFSKLASTSRWVSKVLFSDLPTKIRDMLISSSKLPSYHQDPRVQYLESELLTSFNHGRLSTN</sequence>
<keyword id="KW-0067">ATP-binding</keyword>
<keyword id="KW-0945">Host-virus interaction</keyword>
<keyword id="KW-0378">Hydrolase</keyword>
<keyword id="KW-0489">Methyltransferase</keyword>
<keyword id="KW-1127">Modulation of host ubiquitin pathway by viral deubiquitinase</keyword>
<keyword id="KW-1130">Modulation of host ubiquitin pathway by virus</keyword>
<keyword id="KW-0511">Multifunctional enzyme</keyword>
<keyword id="KW-0547">Nucleotide-binding</keyword>
<keyword id="KW-0548">Nucleotidyltransferase</keyword>
<keyword id="KW-0645">Protease</keyword>
<keyword id="KW-0696">RNA-directed RNA polymerase</keyword>
<keyword id="KW-0788">Thiol protease</keyword>
<keyword id="KW-0808">Transferase</keyword>
<keyword id="KW-0693">Viral RNA replication</keyword>
<comment type="function">
    <molecule>Methyltransferase/Protease</molecule>
    <text evidence="2 3">Acts as a cysteine protease, methyltransferase and deubiquitinase (By similarity). The cysteine protease activity cleaves the polyprotein giving rise to mature proteins (By similarity). The methyltransferase domain is probably involved in viral RNA capping (By similarity).</text>
</comment>
<comment type="function">
    <molecule>RNA-directed RNA polymerase</molecule>
    <text evidence="2">RNA-directed RNA polymerase is responsible for the replication and transcription of the genome.</text>
</comment>
<comment type="catalytic activity">
    <molecule>RNA-directed RNA polymerase</molecule>
    <reaction evidence="4">
        <text>RNA(n) + a ribonucleoside 5'-triphosphate = RNA(n+1) + diphosphate</text>
        <dbReference type="Rhea" id="RHEA:21248"/>
        <dbReference type="Rhea" id="RHEA-COMP:14527"/>
        <dbReference type="Rhea" id="RHEA-COMP:17342"/>
        <dbReference type="ChEBI" id="CHEBI:33019"/>
        <dbReference type="ChEBI" id="CHEBI:61557"/>
        <dbReference type="ChEBI" id="CHEBI:140395"/>
        <dbReference type="EC" id="2.7.7.48"/>
    </reaction>
</comment>
<comment type="PTM">
    <text evidence="3">Specific enzymatic cleavages by the host yield mature proteins.</text>
</comment>
<comment type="similarity">
    <text evidence="8">Belongs to the Tymoviridae non-structural replication polyprotein family.</text>
</comment>
<feature type="chain" id="PRO_0000222936" description="Non-structural replication polyprotein">
    <location>
        <begin position="1"/>
        <end position="1776"/>
    </location>
</feature>
<feature type="chain" id="PRO_0000460991" description="Methyltransferase/Protease">
    <location>
        <begin position="1"/>
        <end position="806" status="uncertain"/>
    </location>
</feature>
<feature type="chain" id="PRO_0000460992" description="Putative helicase">
    <location>
        <begin position="807" status="uncertain"/>
        <end position="1180" status="uncertain"/>
    </location>
</feature>
<feature type="chain" id="PRO_0000460993" description="RNA-directed RNA polymerase">
    <location>
        <begin position="1181" status="uncertain"/>
        <end position="1776"/>
    </location>
</feature>
<feature type="domain" description="Alphavirus-like MT" evidence="6">
    <location>
        <begin position="58"/>
        <end position="219"/>
    </location>
</feature>
<feature type="domain" description="Peptidase C21" evidence="5">
    <location>
        <begin position="658"/>
        <end position="812"/>
    </location>
</feature>
<feature type="domain" description="(+)RNA virus helicase ATP-binding">
    <location>
        <begin position="866"/>
        <end position="1026"/>
    </location>
</feature>
<feature type="domain" description="(+)RNA virus helicase C-terminal">
    <location>
        <begin position="1027"/>
        <end position="1159"/>
    </location>
</feature>
<feature type="domain" description="RdRp catalytic" evidence="4">
    <location>
        <begin position="1497"/>
        <end position="1603"/>
    </location>
</feature>
<feature type="region of interest" description="Disordered" evidence="7">
    <location>
        <begin position="546"/>
        <end position="583"/>
    </location>
</feature>
<feature type="region of interest" description="Disordered" evidence="7">
    <location>
        <begin position="595"/>
        <end position="615"/>
    </location>
</feature>
<feature type="compositionally biased region" description="Pro residues" evidence="7">
    <location>
        <begin position="546"/>
        <end position="582"/>
    </location>
</feature>
<feature type="active site" description="For protease activity" evidence="5">
    <location>
        <position position="711"/>
    </location>
</feature>
<feature type="active site" description="For protease activity" evidence="5">
    <location>
        <position position="797"/>
    </location>
</feature>
<feature type="binding site" evidence="1">
    <location>
        <begin position="899"/>
        <end position="906"/>
    </location>
    <ligand>
        <name>ATP</name>
        <dbReference type="ChEBI" id="CHEBI:30616"/>
    </ligand>
</feature>
<feature type="site" description="Cleavage; by viral protease" evidence="2">
    <location>
        <begin position="806"/>
        <end position="807"/>
    </location>
</feature>
<feature type="site" description="Cleavage; by viral protease" evidence="2">
    <location>
        <begin position="1180"/>
        <end position="1181"/>
    </location>
</feature>
<accession>P20127</accession>
<organismHost>
    <name type="scientific">Ononis</name>
    <dbReference type="NCBI Taxonomy" id="58889"/>
</organismHost>
<reference key="1">
    <citation type="journal article" date="1989" name="Virology">
        <title>Nucleotide sequence of the ononis yellow mosaic tymovirus genome.</title>
        <authorList>
            <person name="Ding S.W."/>
            <person name="Keese P."/>
            <person name="Gibbs A."/>
        </authorList>
    </citation>
    <scope>NUCLEOTIDE SEQUENCE [GENOMIC RNA]</scope>
</reference>
<dbReference type="EC" id="2.1.1.-"/>
<dbReference type="EC" id="3.4.22.-"/>
<dbReference type="EC" id="3.6.4.-"/>
<dbReference type="EC" id="2.7.7.48"/>
<dbReference type="EMBL" id="J04375">
    <property type="protein sequence ID" value="AAA46796.1"/>
    <property type="molecule type" value="Genomic_RNA"/>
</dbReference>
<dbReference type="PIR" id="JQ0106">
    <property type="entry name" value="RRWPYM"/>
</dbReference>
<dbReference type="RefSeq" id="NP_041257.1">
    <property type="nucleotide sequence ID" value="NC_001513.1"/>
</dbReference>
<dbReference type="MEROPS" id="C21.001"/>
<dbReference type="GeneID" id="1493968"/>
<dbReference type="KEGG" id="vg:1493968"/>
<dbReference type="Proteomes" id="UP000007789">
    <property type="component" value="Genome"/>
</dbReference>
<dbReference type="GO" id="GO:0005524">
    <property type="term" value="F:ATP binding"/>
    <property type="evidence" value="ECO:0007669"/>
    <property type="project" value="UniProtKB-KW"/>
</dbReference>
<dbReference type="GO" id="GO:0004197">
    <property type="term" value="F:cysteine-type endopeptidase activity"/>
    <property type="evidence" value="ECO:0007669"/>
    <property type="project" value="InterPro"/>
</dbReference>
<dbReference type="GO" id="GO:0008174">
    <property type="term" value="F:mRNA methyltransferase activity"/>
    <property type="evidence" value="ECO:0007669"/>
    <property type="project" value="InterPro"/>
</dbReference>
<dbReference type="GO" id="GO:0003723">
    <property type="term" value="F:RNA binding"/>
    <property type="evidence" value="ECO:0007669"/>
    <property type="project" value="InterPro"/>
</dbReference>
<dbReference type="GO" id="GO:0003968">
    <property type="term" value="F:RNA-directed RNA polymerase activity"/>
    <property type="evidence" value="ECO:0007669"/>
    <property type="project" value="UniProtKB-KW"/>
</dbReference>
<dbReference type="GO" id="GO:0006351">
    <property type="term" value="P:DNA-templated transcription"/>
    <property type="evidence" value="ECO:0007669"/>
    <property type="project" value="InterPro"/>
</dbReference>
<dbReference type="GO" id="GO:0032259">
    <property type="term" value="P:methylation"/>
    <property type="evidence" value="ECO:0007669"/>
    <property type="project" value="UniProtKB-KW"/>
</dbReference>
<dbReference type="GO" id="GO:0016556">
    <property type="term" value="P:mRNA modification"/>
    <property type="evidence" value="ECO:0007669"/>
    <property type="project" value="InterPro"/>
</dbReference>
<dbReference type="GO" id="GO:0006508">
    <property type="term" value="P:proteolysis"/>
    <property type="evidence" value="ECO:0007669"/>
    <property type="project" value="UniProtKB-KW"/>
</dbReference>
<dbReference type="GO" id="GO:0006396">
    <property type="term" value="P:RNA processing"/>
    <property type="evidence" value="ECO:0007669"/>
    <property type="project" value="InterPro"/>
</dbReference>
<dbReference type="GO" id="GO:0039648">
    <property type="term" value="P:symbiont-mediated perturbation of host ubiquitin-like protein modification"/>
    <property type="evidence" value="ECO:0007669"/>
    <property type="project" value="UniProtKB-KW"/>
</dbReference>
<dbReference type="GO" id="GO:0039694">
    <property type="term" value="P:viral RNA genome replication"/>
    <property type="evidence" value="ECO:0007669"/>
    <property type="project" value="InterPro"/>
</dbReference>
<dbReference type="CDD" id="cd23247">
    <property type="entry name" value="Tymoviridae_RdRp"/>
    <property type="match status" value="1"/>
</dbReference>
<dbReference type="Gene3D" id="3.90.70.100">
    <property type="match status" value="1"/>
</dbReference>
<dbReference type="Gene3D" id="3.40.50.300">
    <property type="entry name" value="P-loop containing nucleotide triphosphate hydrolases"/>
    <property type="match status" value="1"/>
</dbReference>
<dbReference type="InterPro" id="IPR027351">
    <property type="entry name" value="(+)RNA_virus_helicase_core_dom"/>
</dbReference>
<dbReference type="InterPro" id="IPR002588">
    <property type="entry name" value="Alphavirus-like_MT_dom"/>
</dbReference>
<dbReference type="InterPro" id="IPR043502">
    <property type="entry name" value="DNA/RNA_pol_sf"/>
</dbReference>
<dbReference type="InterPro" id="IPR027417">
    <property type="entry name" value="P-loop_NTPase"/>
</dbReference>
<dbReference type="InterPro" id="IPR008043">
    <property type="entry name" value="Peptidase_C21"/>
</dbReference>
<dbReference type="InterPro" id="IPR001788">
    <property type="entry name" value="RNA-dep_RNA_pol_alsuvir"/>
</dbReference>
<dbReference type="InterPro" id="IPR007094">
    <property type="entry name" value="RNA-dir_pol_PSvirus"/>
</dbReference>
<dbReference type="InterPro" id="IPR043181">
    <property type="entry name" value="TYMV_endopept_dom"/>
</dbReference>
<dbReference type="Pfam" id="PF05381">
    <property type="entry name" value="Peptidase_C21"/>
    <property type="match status" value="1"/>
</dbReference>
<dbReference type="Pfam" id="PF00978">
    <property type="entry name" value="RdRP_2"/>
    <property type="match status" value="1"/>
</dbReference>
<dbReference type="Pfam" id="PF01443">
    <property type="entry name" value="Viral_helicase1"/>
    <property type="match status" value="1"/>
</dbReference>
<dbReference type="Pfam" id="PF01660">
    <property type="entry name" value="Vmethyltransf"/>
    <property type="match status" value="1"/>
</dbReference>
<dbReference type="SUPFAM" id="SSF56672">
    <property type="entry name" value="DNA/RNA polymerases"/>
    <property type="match status" value="1"/>
</dbReference>
<dbReference type="SUPFAM" id="SSF52540">
    <property type="entry name" value="P-loop containing nucleoside triphosphate hydrolases"/>
    <property type="match status" value="2"/>
</dbReference>
<dbReference type="PROSITE" id="PS51743">
    <property type="entry name" value="ALPHAVIRUS_MT"/>
    <property type="match status" value="1"/>
</dbReference>
<dbReference type="PROSITE" id="PS51738">
    <property type="entry name" value="PEPTIDASE_C21"/>
    <property type="match status" value="1"/>
</dbReference>
<dbReference type="PROSITE" id="PS51657">
    <property type="entry name" value="PSRV_HELICASE"/>
    <property type="match status" value="1"/>
</dbReference>
<dbReference type="PROSITE" id="PS50507">
    <property type="entry name" value="RDRP_SSRNA_POS"/>
    <property type="match status" value="1"/>
</dbReference>
<name>POLN_OYMV</name>
<protein>
    <recommendedName>
        <fullName evidence="8">Non-structural replication polyprotein</fullName>
    </recommendedName>
    <component>
        <recommendedName>
            <fullName>Methyltransferase/Protease</fullName>
            <ecNumber>2.1.1.-</ecNumber>
            <ecNumber>3.4.22.-</ecNumber>
        </recommendedName>
        <alternativeName>
            <fullName>MET/PRO</fullName>
        </alternativeName>
    </component>
    <component>
        <recommendedName>
            <fullName>Putative helicase</fullName>
            <ecNumber>3.6.4.-</ecNumber>
        </recommendedName>
        <alternativeName>
            <fullName>HEL</fullName>
        </alternativeName>
    </component>
    <component>
        <recommendedName>
            <fullName>RNA-directed RNA polymerase</fullName>
            <ecNumber>2.7.7.48</ecNumber>
        </recommendedName>
        <alternativeName>
            <fullName>POL</fullName>
        </alternativeName>
    </component>
</protein>